<organism>
    <name type="scientific">Drosophila erecta</name>
    <name type="common">Fruit fly</name>
    <dbReference type="NCBI Taxonomy" id="7220"/>
    <lineage>
        <taxon>Eukaryota</taxon>
        <taxon>Metazoa</taxon>
        <taxon>Ecdysozoa</taxon>
        <taxon>Arthropoda</taxon>
        <taxon>Hexapoda</taxon>
        <taxon>Insecta</taxon>
        <taxon>Pterygota</taxon>
        <taxon>Neoptera</taxon>
        <taxon>Endopterygota</taxon>
        <taxon>Diptera</taxon>
        <taxon>Brachycera</taxon>
        <taxon>Muscomorpha</taxon>
        <taxon>Ephydroidea</taxon>
        <taxon>Drosophilidae</taxon>
        <taxon>Drosophila</taxon>
        <taxon>Sophophora</taxon>
    </lineage>
</organism>
<reference key="1">
    <citation type="journal article" date="2007" name="Nature">
        <title>Evolution of genes and genomes on the Drosophila phylogeny.</title>
        <authorList>
            <consortium name="Drosophila 12 genomes consortium"/>
        </authorList>
    </citation>
    <scope>NUCLEOTIDE SEQUENCE [LARGE SCALE GENOMIC DNA]</scope>
    <source>
        <strain>Tucson 14021-0224.01</strain>
    </source>
</reference>
<keyword id="KW-0456">Lyase</keyword>
<keyword id="KW-0472">Membrane</keyword>
<keyword id="KW-0479">Metal-binding</keyword>
<keyword id="KW-0496">Mitochondrion</keyword>
<keyword id="KW-0999">Mitochondrion inner membrane</keyword>
<keyword id="KW-0831">Ubiquinone biosynthesis</keyword>
<keyword id="KW-0862">Zinc</keyword>
<accession>B3NHV5</accession>
<name>COQ4_DROER</name>
<proteinExistence type="inferred from homology"/>
<sequence>MMQRCLRLPKLLALRRDLHLAQVERQAVVTEAPEAEPQDAFERQYFKERIEISPFQRVFLAAGSSIAALLDPRRHDMIACLGETTGEDALWTILDSMQASEEGQRIMADKPRIHTSTIDFKYLETLPPDTFGAAYVKFLKDNQVTPDSRMAVRFLEEPKLAYLMTRYRECHDLIHTVLDMPTNMLGEVSVKWVEALNTGLPMCYGGAVFGAVRLRPKQRRAYLKHYLPWALENGKRTKPLMPVYWEKRWEQNIHDLRSELGITVLNKA</sequence>
<evidence type="ECO:0000255" key="1">
    <source>
        <dbReference type="HAMAP-Rule" id="MF_03111"/>
    </source>
</evidence>
<evidence type="ECO:0000305" key="2"/>
<protein>
    <recommendedName>
        <fullName evidence="1">Ubiquinone biosynthesis protein COQ4 homolog, mitochondrial</fullName>
    </recommendedName>
    <alternativeName>
        <fullName>4-hydroxy-3-methoxy-5-polyprenylbenzoate decarboxylase</fullName>
        <ecNumber evidence="1">4.1.1.130</ecNumber>
    </alternativeName>
    <alternativeName>
        <fullName evidence="1">Coenzyme Q biosynthesis protein 4 homolog</fullName>
    </alternativeName>
</protein>
<feature type="chain" id="PRO_0000388062" description="Ubiquinone biosynthesis protein COQ4 homolog, mitochondrial">
    <location>
        <begin position="1"/>
        <end position="268"/>
    </location>
</feature>
<feature type="binding site" evidence="1">
    <location>
        <position position="171"/>
    </location>
    <ligand>
        <name>Zn(2+)</name>
        <dbReference type="ChEBI" id="CHEBI:29105"/>
    </ligand>
</feature>
<feature type="binding site" evidence="1">
    <location>
        <position position="172"/>
    </location>
    <ligand>
        <name>Zn(2+)</name>
        <dbReference type="ChEBI" id="CHEBI:29105"/>
    </ligand>
</feature>
<feature type="binding site" evidence="1">
    <location>
        <position position="175"/>
    </location>
    <ligand>
        <name>Zn(2+)</name>
        <dbReference type="ChEBI" id="CHEBI:29105"/>
    </ligand>
</feature>
<feature type="binding site" evidence="1">
    <location>
        <position position="187"/>
    </location>
    <ligand>
        <name>Zn(2+)</name>
        <dbReference type="ChEBI" id="CHEBI:29105"/>
    </ligand>
</feature>
<comment type="function">
    <text evidence="1">Lyase that catalyzes the C1-decarboxylation of 4-hydroxy-3-methoxy-5-(all-trans-polyprenyl)benzoic acid into 2-methoxy-6-(all-trans-polyprenyl)phenol during ubiquinone biosynthesis.</text>
</comment>
<comment type="catalytic activity">
    <reaction evidence="1">
        <text>a 4-hydroxy-3-methoxy-5-(all-trans-polyprenyl)benzoate + H(+) = a 2-methoxy-6-(all-trans-polyprenyl)phenol + CO2</text>
        <dbReference type="Rhea" id="RHEA:81179"/>
        <dbReference type="Rhea" id="RHEA-COMP:9551"/>
        <dbReference type="Rhea" id="RHEA-COMP:10931"/>
        <dbReference type="ChEBI" id="CHEBI:15378"/>
        <dbReference type="ChEBI" id="CHEBI:16526"/>
        <dbReference type="ChEBI" id="CHEBI:62731"/>
        <dbReference type="ChEBI" id="CHEBI:84443"/>
        <dbReference type="EC" id="4.1.1.130"/>
    </reaction>
</comment>
<comment type="cofactor">
    <cofactor evidence="1">
        <name>Zn(2+)</name>
        <dbReference type="ChEBI" id="CHEBI:29105"/>
    </cofactor>
</comment>
<comment type="pathway">
    <text evidence="1">Cofactor biosynthesis; ubiquinone biosynthesis.</text>
</comment>
<comment type="subunit">
    <text evidence="1">Component of a multi-subunit COQ enzyme complex.</text>
</comment>
<comment type="subcellular location">
    <subcellularLocation>
        <location evidence="1">Mitochondrion inner membrane</location>
        <topology evidence="1">Peripheral membrane protein</topology>
        <orientation evidence="1">Matrix side</orientation>
    </subcellularLocation>
</comment>
<comment type="miscellaneous">
    <text evidence="1">This protein may be expected to contain an N-terminal transit peptide but none has been predicted.</text>
</comment>
<comment type="similarity">
    <text evidence="1">Belongs to the COQ4 family.</text>
</comment>
<comment type="sequence caution" evidence="2">
    <conflict type="erroneous initiation">
        <sequence resource="EMBL-CDS" id="EDV51970"/>
    </conflict>
</comment>
<gene>
    <name type="ORF">GG15811</name>
</gene>
<dbReference type="EC" id="4.1.1.130" evidence="1"/>
<dbReference type="EMBL" id="CH954178">
    <property type="protein sequence ID" value="EDV51970.1"/>
    <property type="status" value="ALT_INIT"/>
    <property type="molecule type" value="Genomic_DNA"/>
</dbReference>
<dbReference type="RefSeq" id="XP_001972944.2">
    <property type="nucleotide sequence ID" value="XM_001972908.2"/>
</dbReference>
<dbReference type="SMR" id="B3NHV5"/>
<dbReference type="EnsemblMetazoa" id="FBtr0135865">
    <property type="protein sequence ID" value="FBpp0134357"/>
    <property type="gene ID" value="FBgn0108050"/>
</dbReference>
<dbReference type="EnsemblMetazoa" id="XM_001972908.3">
    <property type="protein sequence ID" value="XP_001972944.3"/>
    <property type="gene ID" value="LOC6543613"/>
</dbReference>
<dbReference type="GeneID" id="6543613"/>
<dbReference type="KEGG" id="der:6543613"/>
<dbReference type="eggNOG" id="KOG3244">
    <property type="taxonomic scope" value="Eukaryota"/>
</dbReference>
<dbReference type="OrthoDB" id="4249at2759"/>
<dbReference type="UniPathway" id="UPA00232"/>
<dbReference type="Proteomes" id="UP000008711">
    <property type="component" value="Unassembled WGS sequence"/>
</dbReference>
<dbReference type="GO" id="GO:0031314">
    <property type="term" value="C:extrinsic component of mitochondrial inner membrane"/>
    <property type="evidence" value="ECO:0007669"/>
    <property type="project" value="UniProtKB-UniRule"/>
</dbReference>
<dbReference type="GO" id="GO:0006744">
    <property type="term" value="P:ubiquinone biosynthetic process"/>
    <property type="evidence" value="ECO:0007669"/>
    <property type="project" value="UniProtKB-UniRule"/>
</dbReference>
<dbReference type="HAMAP" id="MF_03111">
    <property type="entry name" value="Coq4"/>
    <property type="match status" value="1"/>
</dbReference>
<dbReference type="InterPro" id="IPR007715">
    <property type="entry name" value="Coq4"/>
</dbReference>
<dbReference type="InterPro" id="IPR027540">
    <property type="entry name" value="Coq4_euk"/>
</dbReference>
<dbReference type="PANTHER" id="PTHR12922">
    <property type="entry name" value="UBIQUINONE BIOSYNTHESIS PROTEIN"/>
    <property type="match status" value="1"/>
</dbReference>
<dbReference type="PANTHER" id="PTHR12922:SF7">
    <property type="entry name" value="UBIQUINONE BIOSYNTHESIS PROTEIN COQ4 HOMOLOG, MITOCHONDRIAL"/>
    <property type="match status" value="1"/>
</dbReference>
<dbReference type="Pfam" id="PF05019">
    <property type="entry name" value="Coq4"/>
    <property type="match status" value="1"/>
</dbReference>